<protein>
    <recommendedName>
        <fullName>E-selectin</fullName>
    </recommendedName>
    <alternativeName>
        <fullName>CD62 antigen-like family member E</fullName>
    </alternativeName>
    <alternativeName>
        <fullName>Endothelial leukocyte adhesion molecule 1</fullName>
        <shortName>ELAM-1</shortName>
    </alternativeName>
    <alternativeName>
        <fullName>Leukocyte-endothelial cell adhesion molecule 2</fullName>
        <shortName>LECAM2</shortName>
    </alternativeName>
    <cdAntigenName>CD62E</cdAntigenName>
</protein>
<reference key="1">
    <citation type="submission" date="1993-11" db="EMBL/GenBank/DDBJ databases">
        <authorList>
            <person name="Rosenbloom C.L."/>
            <person name="Auchampach J.A."/>
            <person name="Anderson D.C."/>
            <person name="Manning A.M."/>
        </authorList>
    </citation>
    <scope>NUCLEOTIDE SEQUENCE [MRNA]</scope>
    <source>
        <tissue>Lung</tissue>
    </source>
</reference>
<sequence length="549" mass="60080">MNASCFLSALTFVLLIGKSIAWYYNASSELMTYDEASAYCQRDYTHLVAIQNKEEINYLNSTLRYSPSYYWIGIRKVNNVWIWVGTQKPLTEEAKNWAPGEPNNKQRNEDCVEIYIQRPKDSGMWNDERCDKKKLALCYTASCTNTSCSGHGECVETINSYTCKCHPGFLGPKCDQVVTCQEQEYPDHGSLNCTHPFGLFSYNSSCSFSCERGYVPSSMETTVRCTSSGEWSAPAPACHVVECKALTQPAHGVRKCSSNPGSYPWNTTCTFDCEEGYRRVGAQNLQCTSSGVWDNEKPSCKAVTCDAIPRPQNGSVSCSNSTAGALAFKSSCNFTCEHSFTLQGPAQVECSAQGQWTPQIPVCKASQCEALSAPQRGHMKCLPSASAPFQSGSSCKFSCDEGFELKGSRRLQCGPRGEWDSEKPTCAGVQCSSLDLPGKMNMSCSGPAVFGTVCEFTCPEGWTLNGSSILTCGATGRWSAMLPTCEAPANPPRPLVVALSVAATSLLTLSSLIYVLKRFFWKKAKKFVPASSCQSLQSFENYQGPSYII</sequence>
<organism>
    <name type="scientific">Rattus norvegicus</name>
    <name type="common">Rat</name>
    <dbReference type="NCBI Taxonomy" id="10116"/>
    <lineage>
        <taxon>Eukaryota</taxon>
        <taxon>Metazoa</taxon>
        <taxon>Chordata</taxon>
        <taxon>Craniata</taxon>
        <taxon>Vertebrata</taxon>
        <taxon>Euteleostomi</taxon>
        <taxon>Mammalia</taxon>
        <taxon>Eutheria</taxon>
        <taxon>Euarchontoglires</taxon>
        <taxon>Glires</taxon>
        <taxon>Rodentia</taxon>
        <taxon>Myomorpha</taxon>
        <taxon>Muroidea</taxon>
        <taxon>Muridae</taxon>
        <taxon>Murinae</taxon>
        <taxon>Rattus</taxon>
    </lineage>
</organism>
<keyword id="KW-0106">Calcium</keyword>
<keyword id="KW-0130">Cell adhesion</keyword>
<keyword id="KW-1003">Cell membrane</keyword>
<keyword id="KW-1015">Disulfide bond</keyword>
<keyword id="KW-0245">EGF-like domain</keyword>
<keyword id="KW-0325">Glycoprotein</keyword>
<keyword id="KW-0430">Lectin</keyword>
<keyword id="KW-0472">Membrane</keyword>
<keyword id="KW-0479">Metal-binding</keyword>
<keyword id="KW-1185">Reference proteome</keyword>
<keyword id="KW-0677">Repeat</keyword>
<keyword id="KW-0732">Signal</keyword>
<keyword id="KW-0768">Sushi</keyword>
<keyword id="KW-0812">Transmembrane</keyword>
<keyword id="KW-1133">Transmembrane helix</keyword>
<proteinExistence type="evidence at transcript level"/>
<comment type="function">
    <text evidence="2">Cell-surface glycoprotein having a role in immunoadhesion. Mediates in the adhesion of blood neutrophils in cytokine-activated endothelium through interaction with SELPLG/PSGL1. May have a role in capillary morphogenesis.</text>
</comment>
<comment type="subunit">
    <text evidence="2">Interacts with SELPLG/PSGL1 and PODXL2 through the sialyl Lewis X epitope. SELPLG sulfation appears not to be required for this interaction.</text>
</comment>
<comment type="subcellular location">
    <subcellularLocation>
        <location evidence="2">Cell membrane</location>
        <topology evidence="2">Single-pass type I membrane protein</topology>
    </subcellularLocation>
</comment>
<comment type="similarity">
    <text evidence="7">Belongs to the selectin/LECAM family.</text>
</comment>
<feature type="signal peptide" evidence="3">
    <location>
        <begin position="1"/>
        <end position="21"/>
    </location>
</feature>
<feature type="chain" id="PRO_0000017496" description="E-selectin">
    <location>
        <begin position="22"/>
        <end position="549"/>
    </location>
</feature>
<feature type="topological domain" description="Extracellular" evidence="3">
    <location>
        <begin position="22"/>
        <end position="494"/>
    </location>
</feature>
<feature type="transmembrane region" description="Helical" evidence="3">
    <location>
        <begin position="495"/>
        <end position="516"/>
    </location>
</feature>
<feature type="topological domain" description="Cytoplasmic" evidence="3">
    <location>
        <begin position="517"/>
        <end position="549"/>
    </location>
</feature>
<feature type="domain" description="C-type lectin" evidence="4">
    <location>
        <begin position="22"/>
        <end position="139"/>
    </location>
</feature>
<feature type="domain" description="EGF-like" evidence="5">
    <location>
        <begin position="140"/>
        <end position="175"/>
    </location>
</feature>
<feature type="domain" description="Sushi 1" evidence="6">
    <location>
        <begin position="178"/>
        <end position="240"/>
    </location>
</feature>
<feature type="domain" description="Sushi 2" evidence="6">
    <location>
        <begin position="241"/>
        <end position="302"/>
    </location>
</feature>
<feature type="domain" description="Sushi 3" evidence="6">
    <location>
        <begin position="303"/>
        <end position="365"/>
    </location>
</feature>
<feature type="domain" description="Sushi 4" evidence="6">
    <location>
        <begin position="366"/>
        <end position="428"/>
    </location>
</feature>
<feature type="domain" description="Sushi 5" evidence="6">
    <location>
        <begin position="429"/>
        <end position="487"/>
    </location>
</feature>
<feature type="binding site" evidence="2">
    <location>
        <begin position="101"/>
        <end position="109"/>
    </location>
    <ligand>
        <name>a carbohydrate</name>
        <dbReference type="ChEBI" id="CHEBI:16646"/>
    </ligand>
</feature>
<feature type="binding site" evidence="2">
    <location>
        <position position="101"/>
    </location>
    <ligand>
        <name>Ca(2+)</name>
        <dbReference type="ChEBI" id="CHEBI:29108"/>
    </ligand>
</feature>
<feature type="binding site" evidence="2">
    <location>
        <position position="103"/>
    </location>
    <ligand>
        <name>Ca(2+)</name>
        <dbReference type="ChEBI" id="CHEBI:29108"/>
    </ligand>
</feature>
<feature type="binding site" evidence="2">
    <location>
        <position position="109"/>
    </location>
    <ligand>
        <name>Ca(2+)</name>
        <dbReference type="ChEBI" id="CHEBI:29108"/>
    </ligand>
</feature>
<feature type="binding site" evidence="2">
    <location>
        <begin position="113"/>
        <end position="118"/>
    </location>
    <ligand>
        <name>a carbohydrate</name>
        <dbReference type="ChEBI" id="CHEBI:16646"/>
    </ligand>
</feature>
<feature type="binding site" evidence="2">
    <location>
        <begin position="126"/>
        <end position="128"/>
    </location>
    <ligand>
        <name>a carbohydrate</name>
        <dbReference type="ChEBI" id="CHEBI:16646"/>
    </ligand>
</feature>
<feature type="binding site" evidence="2">
    <location>
        <position position="126"/>
    </location>
    <ligand>
        <name>Ca(2+)</name>
        <dbReference type="ChEBI" id="CHEBI:29108"/>
    </ligand>
</feature>
<feature type="binding site" evidence="2">
    <location>
        <position position="127"/>
    </location>
    <ligand>
        <name>Ca(2+)</name>
        <dbReference type="ChEBI" id="CHEBI:29108"/>
    </ligand>
</feature>
<feature type="glycosylation site" description="N-linked (GlcNAc...) asparagine" evidence="3">
    <location>
        <position position="25"/>
    </location>
</feature>
<feature type="glycosylation site" description="N-linked (GlcNAc...) asparagine" evidence="3">
    <location>
        <position position="60"/>
    </location>
</feature>
<feature type="glycosylation site" description="N-linked (GlcNAc...) asparagine" evidence="3">
    <location>
        <position position="145"/>
    </location>
</feature>
<feature type="glycosylation site" description="N-linked (GlcNAc...) asparagine" evidence="3">
    <location>
        <position position="192"/>
    </location>
</feature>
<feature type="glycosylation site" description="N-linked (GlcNAc...) asparagine" evidence="3">
    <location>
        <position position="203"/>
    </location>
</feature>
<feature type="glycosylation site" description="N-linked (GlcNAc...) asparagine" evidence="3">
    <location>
        <position position="266"/>
    </location>
</feature>
<feature type="glycosylation site" description="N-linked (GlcNAc...) asparagine" evidence="3">
    <location>
        <position position="313"/>
    </location>
</feature>
<feature type="glycosylation site" description="N-linked (GlcNAc...) asparagine" evidence="3">
    <location>
        <position position="320"/>
    </location>
</feature>
<feature type="glycosylation site" description="N-linked (GlcNAc...) asparagine" evidence="3">
    <location>
        <position position="333"/>
    </location>
</feature>
<feature type="glycosylation site" description="N-linked (GlcNAc...) asparagine" evidence="3">
    <location>
        <position position="441"/>
    </location>
</feature>
<feature type="glycosylation site" description="N-linked (GlcNAc...) asparagine" evidence="3">
    <location>
        <position position="465"/>
    </location>
</feature>
<feature type="disulfide bond" evidence="2">
    <location>
        <begin position="40"/>
        <end position="138"/>
    </location>
</feature>
<feature type="disulfide bond" evidence="2">
    <location>
        <begin position="111"/>
        <end position="130"/>
    </location>
</feature>
<feature type="disulfide bond" evidence="2">
    <location>
        <begin position="143"/>
        <end position="154"/>
    </location>
</feature>
<feature type="disulfide bond" evidence="2">
    <location>
        <begin position="148"/>
        <end position="163"/>
    </location>
</feature>
<feature type="disulfide bond" evidence="2">
    <location>
        <begin position="165"/>
        <end position="174"/>
    </location>
</feature>
<feature type="disulfide bond" evidence="2">
    <location>
        <begin position="180"/>
        <end position="225"/>
    </location>
</feature>
<feature type="disulfide bond" evidence="2">
    <location>
        <begin position="193"/>
        <end position="206"/>
    </location>
</feature>
<feature type="disulfide bond" evidence="2">
    <location>
        <begin position="210"/>
        <end position="238"/>
    </location>
</feature>
<feature type="disulfide bond" evidence="2">
    <location>
        <begin position="243"/>
        <end position="287"/>
    </location>
</feature>
<feature type="disulfide bond" evidence="2">
    <location>
        <begin position="256"/>
        <end position="269"/>
    </location>
</feature>
<feature type="disulfide bond" evidence="2">
    <location>
        <begin position="273"/>
        <end position="300"/>
    </location>
</feature>
<feature type="disulfide bond" evidence="1">
    <location>
        <begin position="305"/>
        <end position="350"/>
    </location>
</feature>
<feature type="disulfide bond" evidence="1">
    <location>
        <begin position="336"/>
        <end position="363"/>
    </location>
</feature>
<feature type="disulfide bond" evidence="1">
    <location>
        <begin position="368"/>
        <end position="413"/>
    </location>
</feature>
<feature type="disulfide bond" evidence="1">
    <location>
        <begin position="399"/>
        <end position="426"/>
    </location>
</feature>
<feature type="disulfide bond" evidence="1">
    <location>
        <begin position="431"/>
        <end position="472"/>
    </location>
</feature>
<feature type="disulfide bond" evidence="1">
    <location>
        <begin position="458"/>
        <end position="485"/>
    </location>
</feature>
<accession>P98105</accession>
<evidence type="ECO:0000250" key="1"/>
<evidence type="ECO:0000250" key="2">
    <source>
        <dbReference type="UniProtKB" id="P16581"/>
    </source>
</evidence>
<evidence type="ECO:0000255" key="3"/>
<evidence type="ECO:0000255" key="4">
    <source>
        <dbReference type="PROSITE-ProRule" id="PRU00040"/>
    </source>
</evidence>
<evidence type="ECO:0000255" key="5">
    <source>
        <dbReference type="PROSITE-ProRule" id="PRU00076"/>
    </source>
</evidence>
<evidence type="ECO:0000255" key="6">
    <source>
        <dbReference type="PROSITE-ProRule" id="PRU00302"/>
    </source>
</evidence>
<evidence type="ECO:0000305" key="7"/>
<gene>
    <name type="primary">Sele</name>
    <name type="synonym">Elam-1</name>
</gene>
<name>LYAM2_RAT</name>
<dbReference type="EMBL" id="L25527">
    <property type="protein sequence ID" value="AAA41113.1"/>
    <property type="molecule type" value="mRNA"/>
</dbReference>
<dbReference type="RefSeq" id="NP_620234.1">
    <property type="nucleotide sequence ID" value="NM_138879.1"/>
</dbReference>
<dbReference type="SMR" id="P98105"/>
<dbReference type="FunCoup" id="P98105">
    <property type="interactions" value="146"/>
</dbReference>
<dbReference type="STRING" id="10116.ENSRNOP00000034797"/>
<dbReference type="BindingDB" id="P98105"/>
<dbReference type="ChEMBL" id="CHEMBL2554"/>
<dbReference type="GlyCosmos" id="P98105">
    <property type="glycosylation" value="11 sites, No reported glycans"/>
</dbReference>
<dbReference type="GlyGen" id="P98105">
    <property type="glycosylation" value="11 sites"/>
</dbReference>
<dbReference type="PhosphoSitePlus" id="P98105"/>
<dbReference type="PaxDb" id="10116-ENSRNOP00000068171"/>
<dbReference type="GeneID" id="25544"/>
<dbReference type="KEGG" id="rno:25544"/>
<dbReference type="UCSC" id="RGD:3654">
    <property type="organism name" value="rat"/>
</dbReference>
<dbReference type="AGR" id="RGD:3654"/>
<dbReference type="CTD" id="6401"/>
<dbReference type="RGD" id="3654">
    <property type="gene designation" value="Sele"/>
</dbReference>
<dbReference type="VEuPathDB" id="HostDB:ENSRNOG00000002723"/>
<dbReference type="eggNOG" id="KOG4297">
    <property type="taxonomic scope" value="Eukaryota"/>
</dbReference>
<dbReference type="HOGENOM" id="CLU_020848_1_0_1"/>
<dbReference type="InParanoid" id="P98105"/>
<dbReference type="Reactome" id="R-RNO-202733">
    <property type="pathway name" value="Cell surface interactions at the vascular wall"/>
</dbReference>
<dbReference type="PRO" id="PR:P98105"/>
<dbReference type="Proteomes" id="UP000002494">
    <property type="component" value="Chromosome 13"/>
</dbReference>
<dbReference type="Bgee" id="ENSRNOG00000002723">
    <property type="expression patterns" value="Expressed in heart and 7 other cell types or tissues"/>
</dbReference>
<dbReference type="ExpressionAtlas" id="P98105">
    <property type="expression patterns" value="baseline and differential"/>
</dbReference>
<dbReference type="GO" id="GO:0005901">
    <property type="term" value="C:caveola"/>
    <property type="evidence" value="ECO:0000266"/>
    <property type="project" value="RGD"/>
</dbReference>
<dbReference type="GO" id="GO:0005905">
    <property type="term" value="C:clathrin-coated pit"/>
    <property type="evidence" value="ECO:0000266"/>
    <property type="project" value="RGD"/>
</dbReference>
<dbReference type="GO" id="GO:0030863">
    <property type="term" value="C:cortical cytoskeleton"/>
    <property type="evidence" value="ECO:0000266"/>
    <property type="project" value="RGD"/>
</dbReference>
<dbReference type="GO" id="GO:0009897">
    <property type="term" value="C:external side of plasma membrane"/>
    <property type="evidence" value="ECO:0000318"/>
    <property type="project" value="GO_Central"/>
</dbReference>
<dbReference type="GO" id="GO:0005615">
    <property type="term" value="C:extracellular space"/>
    <property type="evidence" value="ECO:0000266"/>
    <property type="project" value="RGD"/>
</dbReference>
<dbReference type="GO" id="GO:0045121">
    <property type="term" value="C:membrane raft"/>
    <property type="evidence" value="ECO:0000266"/>
    <property type="project" value="RGD"/>
</dbReference>
<dbReference type="GO" id="GO:0048471">
    <property type="term" value="C:perinuclear region of cytoplasm"/>
    <property type="evidence" value="ECO:0000266"/>
    <property type="project" value="RGD"/>
</dbReference>
<dbReference type="GO" id="GO:0005886">
    <property type="term" value="C:plasma membrane"/>
    <property type="evidence" value="ECO:0000266"/>
    <property type="project" value="RGD"/>
</dbReference>
<dbReference type="GO" id="GO:0046872">
    <property type="term" value="F:metal ion binding"/>
    <property type="evidence" value="ECO:0007669"/>
    <property type="project" value="UniProtKB-KW"/>
</dbReference>
<dbReference type="GO" id="GO:0070492">
    <property type="term" value="F:oligosaccharide binding"/>
    <property type="evidence" value="ECO:0000266"/>
    <property type="project" value="RGD"/>
</dbReference>
<dbReference type="GO" id="GO:0043274">
    <property type="term" value="F:phospholipase binding"/>
    <property type="evidence" value="ECO:0000266"/>
    <property type="project" value="RGD"/>
</dbReference>
<dbReference type="GO" id="GO:0033691">
    <property type="term" value="F:sialic acid binding"/>
    <property type="evidence" value="ECO:0000266"/>
    <property type="project" value="RGD"/>
</dbReference>
<dbReference type="GO" id="GO:0004888">
    <property type="term" value="F:transmembrane signaling receptor activity"/>
    <property type="evidence" value="ECO:0000266"/>
    <property type="project" value="RGD"/>
</dbReference>
<dbReference type="GO" id="GO:0030029">
    <property type="term" value="P:actin filament-based process"/>
    <property type="evidence" value="ECO:0000266"/>
    <property type="project" value="RGD"/>
</dbReference>
<dbReference type="GO" id="GO:0007155">
    <property type="term" value="P:cell adhesion"/>
    <property type="evidence" value="ECO:0000304"/>
    <property type="project" value="RGD"/>
</dbReference>
<dbReference type="GO" id="GO:0007157">
    <property type="term" value="P:heterophilic cell-cell adhesion via plasma membrane cell adhesion molecules"/>
    <property type="evidence" value="ECO:0000266"/>
    <property type="project" value="RGD"/>
</dbReference>
<dbReference type="GO" id="GO:0007159">
    <property type="term" value="P:leukocyte cell-cell adhesion"/>
    <property type="evidence" value="ECO:0000266"/>
    <property type="project" value="RGD"/>
</dbReference>
<dbReference type="GO" id="GO:0050900">
    <property type="term" value="P:leukocyte migration"/>
    <property type="evidence" value="ECO:0000270"/>
    <property type="project" value="RGD"/>
</dbReference>
<dbReference type="GO" id="GO:0050901">
    <property type="term" value="P:leukocyte tethering or rolling"/>
    <property type="evidence" value="ECO:0000266"/>
    <property type="project" value="RGD"/>
</dbReference>
<dbReference type="GO" id="GO:0007200">
    <property type="term" value="P:phospholipase C-activating G protein-coupled receptor signaling pathway"/>
    <property type="evidence" value="ECO:0000266"/>
    <property type="project" value="RGD"/>
</dbReference>
<dbReference type="GO" id="GO:0002687">
    <property type="term" value="P:positive regulation of leukocyte migration"/>
    <property type="evidence" value="ECO:0000266"/>
    <property type="project" value="RGD"/>
</dbReference>
<dbReference type="GO" id="GO:1903238">
    <property type="term" value="P:positive regulation of leukocyte tethering or rolling"/>
    <property type="evidence" value="ECO:0000250"/>
    <property type="project" value="UniProtKB"/>
</dbReference>
<dbReference type="GO" id="GO:0002092">
    <property type="term" value="P:positive regulation of receptor internalization"/>
    <property type="evidence" value="ECO:0000266"/>
    <property type="project" value="RGD"/>
</dbReference>
<dbReference type="GO" id="GO:0034097">
    <property type="term" value="P:response to cytokine"/>
    <property type="evidence" value="ECO:0000270"/>
    <property type="project" value="RGD"/>
</dbReference>
<dbReference type="GO" id="GO:0070555">
    <property type="term" value="P:response to interleukin-1"/>
    <property type="evidence" value="ECO:0000266"/>
    <property type="project" value="RGD"/>
</dbReference>
<dbReference type="CDD" id="cd00033">
    <property type="entry name" value="CCP"/>
    <property type="match status" value="5"/>
</dbReference>
<dbReference type="CDD" id="cd03592">
    <property type="entry name" value="CLECT_selectins_like"/>
    <property type="match status" value="1"/>
</dbReference>
<dbReference type="CDD" id="cd00054">
    <property type="entry name" value="EGF_CA"/>
    <property type="match status" value="1"/>
</dbReference>
<dbReference type="FunFam" id="3.10.100.10:FF:000007">
    <property type="entry name" value="L-selectin"/>
    <property type="match status" value="1"/>
</dbReference>
<dbReference type="FunFam" id="2.10.25.10:FF:000176">
    <property type="entry name" value="Selectin P"/>
    <property type="match status" value="1"/>
</dbReference>
<dbReference type="FunFam" id="2.10.70.10:FF:000001">
    <property type="entry name" value="Selectin P"/>
    <property type="match status" value="4"/>
</dbReference>
<dbReference type="Gene3D" id="2.10.70.10">
    <property type="entry name" value="Complement Module, domain 1"/>
    <property type="match status" value="5"/>
</dbReference>
<dbReference type="Gene3D" id="3.10.100.10">
    <property type="entry name" value="Mannose-Binding Protein A, subunit A"/>
    <property type="match status" value="1"/>
</dbReference>
<dbReference type="InterPro" id="IPR001304">
    <property type="entry name" value="C-type_lectin-like"/>
</dbReference>
<dbReference type="InterPro" id="IPR016186">
    <property type="entry name" value="C-type_lectin-like/link_sf"/>
</dbReference>
<dbReference type="InterPro" id="IPR018378">
    <property type="entry name" value="C-type_lectin_CS"/>
</dbReference>
<dbReference type="InterPro" id="IPR050350">
    <property type="entry name" value="Compl-Cell_Adhes-Reg"/>
</dbReference>
<dbReference type="InterPro" id="IPR016187">
    <property type="entry name" value="CTDL_fold"/>
</dbReference>
<dbReference type="InterPro" id="IPR000742">
    <property type="entry name" value="EGF-like_dom"/>
</dbReference>
<dbReference type="InterPro" id="IPR033991">
    <property type="entry name" value="Selectin_CTLD"/>
</dbReference>
<dbReference type="InterPro" id="IPR002396">
    <property type="entry name" value="Selectin_superfamily"/>
</dbReference>
<dbReference type="InterPro" id="IPR035976">
    <property type="entry name" value="Sushi/SCR/CCP_sf"/>
</dbReference>
<dbReference type="InterPro" id="IPR000436">
    <property type="entry name" value="Sushi_SCR_CCP_dom"/>
</dbReference>
<dbReference type="PANTHER" id="PTHR19325">
    <property type="entry name" value="COMPLEMENT COMPONENT-RELATED SUSHI DOMAIN-CONTAINING"/>
    <property type="match status" value="1"/>
</dbReference>
<dbReference type="PANTHER" id="PTHR19325:SF493">
    <property type="entry name" value="E-SELECTIN"/>
    <property type="match status" value="1"/>
</dbReference>
<dbReference type="Pfam" id="PF00008">
    <property type="entry name" value="EGF"/>
    <property type="match status" value="1"/>
</dbReference>
<dbReference type="Pfam" id="PF00059">
    <property type="entry name" value="Lectin_C"/>
    <property type="match status" value="1"/>
</dbReference>
<dbReference type="Pfam" id="PF00084">
    <property type="entry name" value="Sushi"/>
    <property type="match status" value="5"/>
</dbReference>
<dbReference type="PRINTS" id="PR00343">
    <property type="entry name" value="SELECTIN"/>
</dbReference>
<dbReference type="SMART" id="SM00032">
    <property type="entry name" value="CCP"/>
    <property type="match status" value="5"/>
</dbReference>
<dbReference type="SMART" id="SM00034">
    <property type="entry name" value="CLECT"/>
    <property type="match status" value="1"/>
</dbReference>
<dbReference type="SMART" id="SM00181">
    <property type="entry name" value="EGF"/>
    <property type="match status" value="2"/>
</dbReference>
<dbReference type="SUPFAM" id="SSF56436">
    <property type="entry name" value="C-type lectin-like"/>
    <property type="match status" value="1"/>
</dbReference>
<dbReference type="SUPFAM" id="SSF57535">
    <property type="entry name" value="Complement control module/SCR domain"/>
    <property type="match status" value="5"/>
</dbReference>
<dbReference type="PROSITE" id="PS00615">
    <property type="entry name" value="C_TYPE_LECTIN_1"/>
    <property type="match status" value="1"/>
</dbReference>
<dbReference type="PROSITE" id="PS50041">
    <property type="entry name" value="C_TYPE_LECTIN_2"/>
    <property type="match status" value="1"/>
</dbReference>
<dbReference type="PROSITE" id="PS00022">
    <property type="entry name" value="EGF_1"/>
    <property type="match status" value="1"/>
</dbReference>
<dbReference type="PROSITE" id="PS01186">
    <property type="entry name" value="EGF_2"/>
    <property type="match status" value="1"/>
</dbReference>
<dbReference type="PROSITE" id="PS50026">
    <property type="entry name" value="EGF_3"/>
    <property type="match status" value="1"/>
</dbReference>
<dbReference type="PROSITE" id="PS50923">
    <property type="entry name" value="SUSHI"/>
    <property type="match status" value="5"/>
</dbReference>